<protein>
    <recommendedName>
        <fullName evidence="1">HTH-type transcriptional activator RhaS</fullName>
    </recommendedName>
    <alternativeName>
        <fullName evidence="1">L-rhamnose operon regulatory protein RhaS</fullName>
    </alternativeName>
</protein>
<keyword id="KW-0010">Activator</keyword>
<keyword id="KW-0963">Cytoplasm</keyword>
<keyword id="KW-0238">DNA-binding</keyword>
<keyword id="KW-0677">Repeat</keyword>
<keyword id="KW-0684">Rhamnose metabolism</keyword>
<keyword id="KW-0804">Transcription</keyword>
<keyword id="KW-0805">Transcription regulation</keyword>
<comment type="function">
    <text evidence="1">Activates expression of the rhaBAD and rhaT operons.</text>
</comment>
<comment type="subunit">
    <text evidence="1">Binds DNA as a dimer.</text>
</comment>
<comment type="subcellular location">
    <subcellularLocation>
        <location evidence="1">Cytoplasm</location>
    </subcellularLocation>
</comment>
<accession>B5BJG8</accession>
<sequence>MTVLHSVDFFPSGKAPVAIEPRLPQAAFPEHHHDFHEIVIVEHGTGIHVFNGQPYTISGGTVCFVRDHDRHLYEHTDNLCLTNVLWRSPDAFQFLAGLDQLLPQEQDGYYPSHWRVNQSVLQQVRQLVGLMEHAGDGMDAPAVANREILFMQLLVLLRRSSLMEGATNNDAKLNQLMAWLEDHFAEEVCWEAVAEQFSLSLRTLHRQLKQHTGLTPQRYLNRLRLIKARHLLRHSDHSVTEIAYRCGFGDSNHFSTLFRREFNWSPRDIRQGRDAIIQ</sequence>
<gene>
    <name evidence="1" type="primary">rhaS</name>
    <name type="ordered locus">SSPA3619</name>
</gene>
<organism>
    <name type="scientific">Salmonella paratyphi A (strain AKU_12601)</name>
    <dbReference type="NCBI Taxonomy" id="554290"/>
    <lineage>
        <taxon>Bacteria</taxon>
        <taxon>Pseudomonadati</taxon>
        <taxon>Pseudomonadota</taxon>
        <taxon>Gammaproteobacteria</taxon>
        <taxon>Enterobacterales</taxon>
        <taxon>Enterobacteriaceae</taxon>
        <taxon>Salmonella</taxon>
    </lineage>
</organism>
<evidence type="ECO:0000255" key="1">
    <source>
        <dbReference type="HAMAP-Rule" id="MF_01534"/>
    </source>
</evidence>
<dbReference type="EMBL" id="FM200053">
    <property type="protein sequence ID" value="CAR61901.1"/>
    <property type="molecule type" value="Genomic_DNA"/>
</dbReference>
<dbReference type="RefSeq" id="WP_000217109.1">
    <property type="nucleotide sequence ID" value="NC_011147.1"/>
</dbReference>
<dbReference type="SMR" id="B5BJG8"/>
<dbReference type="KEGG" id="sek:SSPA3619"/>
<dbReference type="HOGENOM" id="CLU_000445_88_5_6"/>
<dbReference type="Proteomes" id="UP000001869">
    <property type="component" value="Chromosome"/>
</dbReference>
<dbReference type="GO" id="GO:0005737">
    <property type="term" value="C:cytoplasm"/>
    <property type="evidence" value="ECO:0007669"/>
    <property type="project" value="UniProtKB-SubCell"/>
</dbReference>
<dbReference type="GO" id="GO:0003700">
    <property type="term" value="F:DNA-binding transcription factor activity"/>
    <property type="evidence" value="ECO:0007669"/>
    <property type="project" value="UniProtKB-UniRule"/>
</dbReference>
<dbReference type="GO" id="GO:0043565">
    <property type="term" value="F:sequence-specific DNA binding"/>
    <property type="evidence" value="ECO:0007669"/>
    <property type="project" value="InterPro"/>
</dbReference>
<dbReference type="GO" id="GO:0045893">
    <property type="term" value="P:positive regulation of DNA-templated transcription"/>
    <property type="evidence" value="ECO:0007669"/>
    <property type="project" value="UniProtKB-UniRule"/>
</dbReference>
<dbReference type="GO" id="GO:0019299">
    <property type="term" value="P:rhamnose metabolic process"/>
    <property type="evidence" value="ECO:0007669"/>
    <property type="project" value="UniProtKB-UniRule"/>
</dbReference>
<dbReference type="CDD" id="cd06977">
    <property type="entry name" value="cupin_RhaR_RhaS-like_N"/>
    <property type="match status" value="1"/>
</dbReference>
<dbReference type="Gene3D" id="1.10.10.60">
    <property type="entry name" value="Homeodomain-like"/>
    <property type="match status" value="1"/>
</dbReference>
<dbReference type="Gene3D" id="2.60.120.10">
    <property type="entry name" value="Jelly Rolls"/>
    <property type="match status" value="1"/>
</dbReference>
<dbReference type="HAMAP" id="MF_01534">
    <property type="entry name" value="HTH_type_RhaS"/>
    <property type="match status" value="1"/>
</dbReference>
<dbReference type="InterPro" id="IPR003313">
    <property type="entry name" value="AraC-bd"/>
</dbReference>
<dbReference type="InterPro" id="IPR050204">
    <property type="entry name" value="AraC_XylS_family_regulators"/>
</dbReference>
<dbReference type="InterPro" id="IPR009057">
    <property type="entry name" value="Homeodomain-like_sf"/>
</dbReference>
<dbReference type="InterPro" id="IPR037923">
    <property type="entry name" value="HTH-like"/>
</dbReference>
<dbReference type="InterPro" id="IPR018060">
    <property type="entry name" value="HTH_AraC"/>
</dbReference>
<dbReference type="InterPro" id="IPR018062">
    <property type="entry name" value="HTH_AraC-typ_CS"/>
</dbReference>
<dbReference type="InterPro" id="IPR047220">
    <property type="entry name" value="RhaR_RhaS-like_N"/>
</dbReference>
<dbReference type="InterPro" id="IPR014710">
    <property type="entry name" value="RmlC-like_jellyroll"/>
</dbReference>
<dbReference type="InterPro" id="IPR020449">
    <property type="entry name" value="Tscrpt_reg_AraC-type_HTH"/>
</dbReference>
<dbReference type="InterPro" id="IPR023609">
    <property type="entry name" value="Tscrpt_reg_HTH_RhaS"/>
</dbReference>
<dbReference type="NCBIfam" id="NF010028">
    <property type="entry name" value="PRK13503.1"/>
    <property type="match status" value="1"/>
</dbReference>
<dbReference type="PANTHER" id="PTHR46796:SF13">
    <property type="entry name" value="HTH-TYPE TRANSCRIPTIONAL ACTIVATOR RHAS"/>
    <property type="match status" value="1"/>
</dbReference>
<dbReference type="PANTHER" id="PTHR46796">
    <property type="entry name" value="HTH-TYPE TRANSCRIPTIONAL ACTIVATOR RHAS-RELATED"/>
    <property type="match status" value="1"/>
</dbReference>
<dbReference type="Pfam" id="PF02311">
    <property type="entry name" value="AraC_binding"/>
    <property type="match status" value="1"/>
</dbReference>
<dbReference type="Pfam" id="PF12833">
    <property type="entry name" value="HTH_18"/>
    <property type="match status" value="1"/>
</dbReference>
<dbReference type="PRINTS" id="PR00032">
    <property type="entry name" value="HTHARAC"/>
</dbReference>
<dbReference type="SMART" id="SM00342">
    <property type="entry name" value="HTH_ARAC"/>
    <property type="match status" value="1"/>
</dbReference>
<dbReference type="SUPFAM" id="SSF46689">
    <property type="entry name" value="Homeodomain-like"/>
    <property type="match status" value="2"/>
</dbReference>
<dbReference type="SUPFAM" id="SSF51215">
    <property type="entry name" value="Regulatory protein AraC"/>
    <property type="match status" value="1"/>
</dbReference>
<dbReference type="PROSITE" id="PS00041">
    <property type="entry name" value="HTH_ARAC_FAMILY_1"/>
    <property type="match status" value="1"/>
</dbReference>
<dbReference type="PROSITE" id="PS01124">
    <property type="entry name" value="HTH_ARAC_FAMILY_2"/>
    <property type="match status" value="1"/>
</dbReference>
<feature type="chain" id="PRO_1000200964" description="HTH-type transcriptional activator RhaS">
    <location>
        <begin position="1"/>
        <end position="278"/>
    </location>
</feature>
<feature type="domain" description="HTH araC/xylS-type" evidence="1">
    <location>
        <begin position="174"/>
        <end position="272"/>
    </location>
</feature>
<feature type="DNA-binding region" description="H-T-H motif" evidence="1">
    <location>
        <begin position="191"/>
        <end position="212"/>
    </location>
</feature>
<feature type="DNA-binding region" description="H-T-H motif" evidence="1">
    <location>
        <begin position="239"/>
        <end position="262"/>
    </location>
</feature>
<feature type="site" description="Interaction with sigma-70" evidence="1">
    <location>
        <position position="241"/>
    </location>
</feature>
<feature type="site" description="Interaction with sigma-70" evidence="1">
    <location>
        <position position="250"/>
    </location>
</feature>
<proteinExistence type="inferred from homology"/>
<reference key="1">
    <citation type="journal article" date="2009" name="BMC Genomics">
        <title>Pseudogene accumulation in the evolutionary histories of Salmonella enterica serovars Paratyphi A and Typhi.</title>
        <authorList>
            <person name="Holt K.E."/>
            <person name="Thomson N.R."/>
            <person name="Wain J."/>
            <person name="Langridge G.C."/>
            <person name="Hasan R."/>
            <person name="Bhutta Z.A."/>
            <person name="Quail M.A."/>
            <person name="Norbertczak H."/>
            <person name="Walker D."/>
            <person name="Simmonds M."/>
            <person name="White B."/>
            <person name="Bason N."/>
            <person name="Mungall K."/>
            <person name="Dougan G."/>
            <person name="Parkhill J."/>
        </authorList>
    </citation>
    <scope>NUCLEOTIDE SEQUENCE [LARGE SCALE GENOMIC DNA]</scope>
    <source>
        <strain>AKU_12601</strain>
    </source>
</reference>
<name>RHAS_SALPK</name>